<gene>
    <name type="primary">OPG137</name>
    <name type="ORF">A11R</name>
</gene>
<proteinExistence type="evidence at transcript level"/>
<comment type="function">
    <text evidence="1">Required for viral crescent formation early during virus morphogenesis.</text>
</comment>
<comment type="subunit">
    <text evidence="1">Homomultimer. Interacts with OPG160.</text>
</comment>
<comment type="subcellular location">
    <subcellularLocation>
        <location evidence="1">Host cytoplasm</location>
    </subcellularLocation>
    <text evidence="1">Localizes to the cytoplasmic viral factory. Not incorporated into virus particles. Does not seem to be a transmembrane protein.</text>
</comment>
<comment type="induction">
    <text>Expressed in the late phase of the viral replicative cycle.</text>
</comment>
<comment type="PTM">
    <text evidence="1">Phosphorylated by a OPG054-independent mechanism.</text>
</comment>
<comment type="similarity">
    <text evidence="3">Belongs to the orthopoxvirus OPG137 family.</text>
</comment>
<accession>P0DOQ7</accession>
<accession>P33836</accession>
<organism>
    <name type="scientific">Variola virus (isolate Human/India/Ind3/1967)</name>
    <name type="common">VARV</name>
    <name type="synonym">Smallpox virus</name>
    <dbReference type="NCBI Taxonomy" id="587200"/>
    <lineage>
        <taxon>Viruses</taxon>
        <taxon>Varidnaviria</taxon>
        <taxon>Bamfordvirae</taxon>
        <taxon>Nucleocytoviricota</taxon>
        <taxon>Pokkesviricetes</taxon>
        <taxon>Chitovirales</taxon>
        <taxon>Poxviridae</taxon>
        <taxon>Chordopoxvirinae</taxon>
        <taxon>Orthopoxvirus</taxon>
        <taxon>Variola virus</taxon>
    </lineage>
</organism>
<protein>
    <recommendedName>
        <fullName>Protein OPG137</fullName>
    </recommendedName>
</protein>
<feature type="chain" id="PRO_0000099233" description="Protein OPG137">
    <location>
        <begin position="1"/>
        <end position="319"/>
    </location>
</feature>
<feature type="coiled-coil region" evidence="2">
    <location>
        <begin position="146"/>
        <end position="173"/>
    </location>
</feature>
<reference key="1">
    <citation type="journal article" date="1993" name="FEBS Lett.">
        <title>Genes of variola and vaccinia viruses necessary to overcome the host protective mechanisms.</title>
        <authorList>
            <person name="Shchelkunov S.N."/>
            <person name="Blinov V.M."/>
            <person name="Sandakhchiev L.S."/>
        </authorList>
    </citation>
    <scope>NUCLEOTIDE SEQUENCE [LARGE SCALE GENOMIC DNA]</scope>
</reference>
<name>PG137_VAR67</name>
<keyword id="KW-0175">Coiled coil</keyword>
<keyword id="KW-1035">Host cytoplasm</keyword>
<keyword id="KW-0426">Late protein</keyword>
<keyword id="KW-0597">Phosphoprotein</keyword>
<keyword id="KW-1185">Reference proteome</keyword>
<sequence length="319" mass="36234">MTTVPVTDIQNDLITEFSEDNYPSNKNYEITLRQMSILTHVNNVVDREHNAAVVSSPEEISSQLNEDLFPDDDSPATIIERVQQPHTTIIDDTPPPTFRRELLISEQRQQREKRFNITVSKNAEAIMESRSMITSMPTQTPSLGVVYDKDKRIQMLEDEVVNLRNQQSNTKSSNNLDNFTRILFGKTPYKSTEVNKRIAIVNYANLNGSPLSVEDLDVCSEDEIDRIYKTIKQYHESRKRKIIVTNVIIIVINIIEQALLKLGFDEIKGLSTDITSEIIDVEIGDDCDAVASKLGIGNSPVLNIVLFILKIFVKRIKII</sequence>
<dbReference type="EMBL" id="X69198">
    <property type="protein sequence ID" value="CAA49056.1"/>
    <property type="molecule type" value="Genomic_DNA"/>
</dbReference>
<dbReference type="PIR" id="C36849">
    <property type="entry name" value="C36849"/>
</dbReference>
<dbReference type="RefSeq" id="NP_042159.1">
    <property type="nucleotide sequence ID" value="NC_001611.1"/>
</dbReference>
<dbReference type="SMR" id="P0DOQ7"/>
<dbReference type="GeneID" id="1486486"/>
<dbReference type="KEGG" id="vg:1486486"/>
<dbReference type="Proteomes" id="UP000002060">
    <property type="component" value="Segment"/>
</dbReference>
<dbReference type="GO" id="GO:0030430">
    <property type="term" value="C:host cell cytoplasm"/>
    <property type="evidence" value="ECO:0007669"/>
    <property type="project" value="UniProtKB-SubCell"/>
</dbReference>
<dbReference type="InterPro" id="IPR007755">
    <property type="entry name" value="Poxvirus_A11"/>
</dbReference>
<dbReference type="Pfam" id="PF05061">
    <property type="entry name" value="Pox_A11"/>
    <property type="match status" value="1"/>
</dbReference>
<evidence type="ECO:0000250" key="1">
    <source>
        <dbReference type="UniProtKB" id="Q80HV8"/>
    </source>
</evidence>
<evidence type="ECO:0000255" key="2"/>
<evidence type="ECO:0000305" key="3"/>
<organismHost>
    <name type="scientific">Homo sapiens</name>
    <name type="common">Human</name>
    <dbReference type="NCBI Taxonomy" id="9606"/>
</organismHost>